<organism>
    <name type="scientific">Mus musculus</name>
    <name type="common">Mouse</name>
    <dbReference type="NCBI Taxonomy" id="10090"/>
    <lineage>
        <taxon>Eukaryota</taxon>
        <taxon>Metazoa</taxon>
        <taxon>Chordata</taxon>
        <taxon>Craniata</taxon>
        <taxon>Vertebrata</taxon>
        <taxon>Euteleostomi</taxon>
        <taxon>Mammalia</taxon>
        <taxon>Eutheria</taxon>
        <taxon>Euarchontoglires</taxon>
        <taxon>Glires</taxon>
        <taxon>Rodentia</taxon>
        <taxon>Myomorpha</taxon>
        <taxon>Muroidea</taxon>
        <taxon>Muridae</taxon>
        <taxon>Murinae</taxon>
        <taxon>Mus</taxon>
        <taxon>Mus</taxon>
    </lineage>
</organism>
<protein>
    <recommendedName>
        <fullName>Zinc finger transcription factor Trps1</fullName>
    </recommendedName>
</protein>
<gene>
    <name type="primary">Trps1</name>
</gene>
<dbReference type="EMBL" id="AF346836">
    <property type="protein sequence ID" value="AAK39508.1"/>
    <property type="molecule type" value="mRNA"/>
</dbReference>
<dbReference type="CCDS" id="CCDS27460.1"/>
<dbReference type="FunCoup" id="Q925H1">
    <property type="interactions" value="863"/>
</dbReference>
<dbReference type="IntAct" id="Q925H1">
    <property type="interactions" value="2"/>
</dbReference>
<dbReference type="MINT" id="Q925H1"/>
<dbReference type="STRING" id="10090.ENSMUSP00000139017"/>
<dbReference type="GlyGen" id="Q925H1">
    <property type="glycosylation" value="1 site, 1 O-linked glycan (1 site)"/>
</dbReference>
<dbReference type="iPTMnet" id="Q925H1"/>
<dbReference type="PhosphoSitePlus" id="Q925H1"/>
<dbReference type="PaxDb" id="10090-ENSMUSP00000129779"/>
<dbReference type="ProteomicsDB" id="298139"/>
<dbReference type="Pumba" id="Q925H1"/>
<dbReference type="AGR" id="MGI:1927616"/>
<dbReference type="MGI" id="MGI:1927616">
    <property type="gene designation" value="Trps1"/>
</dbReference>
<dbReference type="eggNOG" id="KOG1601">
    <property type="taxonomic scope" value="Eukaryota"/>
</dbReference>
<dbReference type="InParanoid" id="Q925H1"/>
<dbReference type="PhylomeDB" id="Q925H1"/>
<dbReference type="ChiTaRS" id="Trps1">
    <property type="organism name" value="mouse"/>
</dbReference>
<dbReference type="PRO" id="PR:Q925H1"/>
<dbReference type="Proteomes" id="UP000000589">
    <property type="component" value="Unplaced"/>
</dbReference>
<dbReference type="RNAct" id="Q925H1">
    <property type="molecule type" value="protein"/>
</dbReference>
<dbReference type="GO" id="GO:0005634">
    <property type="term" value="C:nucleus"/>
    <property type="evidence" value="ECO:0000314"/>
    <property type="project" value="MGI"/>
</dbReference>
<dbReference type="GO" id="GO:0003700">
    <property type="term" value="F:DNA-binding transcription factor activity"/>
    <property type="evidence" value="ECO:0007669"/>
    <property type="project" value="InterPro"/>
</dbReference>
<dbReference type="GO" id="GO:0043565">
    <property type="term" value="F:sequence-specific DNA binding"/>
    <property type="evidence" value="ECO:0007669"/>
    <property type="project" value="InterPro"/>
</dbReference>
<dbReference type="GO" id="GO:0008270">
    <property type="term" value="F:zinc ion binding"/>
    <property type="evidence" value="ECO:0007669"/>
    <property type="project" value="UniProtKB-KW"/>
</dbReference>
<dbReference type="GO" id="GO:0007178">
    <property type="term" value="P:cell surface receptor protein serine/threonine kinase signaling pathway"/>
    <property type="evidence" value="ECO:0000316"/>
    <property type="project" value="MGI"/>
</dbReference>
<dbReference type="GO" id="GO:0002062">
    <property type="term" value="P:chondrocyte differentiation"/>
    <property type="evidence" value="ECO:0000316"/>
    <property type="project" value="MGI"/>
</dbReference>
<dbReference type="GO" id="GO:0001942">
    <property type="term" value="P:hair follicle development"/>
    <property type="evidence" value="ECO:0000315"/>
    <property type="project" value="CACAO"/>
</dbReference>
<dbReference type="GO" id="GO:0045892">
    <property type="term" value="P:negative regulation of DNA-templated transcription"/>
    <property type="evidence" value="ECO:0000315"/>
    <property type="project" value="CACAO"/>
</dbReference>
<dbReference type="GO" id="GO:0000122">
    <property type="term" value="P:negative regulation of transcription by RNA polymerase II"/>
    <property type="evidence" value="ECO:0000250"/>
    <property type="project" value="UniProtKB"/>
</dbReference>
<dbReference type="GO" id="GO:1902043">
    <property type="term" value="P:positive regulation of extrinsic apoptotic signaling pathway via death domain receptors"/>
    <property type="evidence" value="ECO:0000316"/>
    <property type="project" value="MGI"/>
</dbReference>
<dbReference type="GO" id="GO:0032330">
    <property type="term" value="P:regulation of chondrocyte differentiation"/>
    <property type="evidence" value="ECO:0000315"/>
    <property type="project" value="UniProtKB"/>
</dbReference>
<dbReference type="CDD" id="cd00202">
    <property type="entry name" value="ZnF_GATA"/>
    <property type="match status" value="1"/>
</dbReference>
<dbReference type="FunFam" id="3.30.160.60:FF:001213">
    <property type="entry name" value="Transcriptional repressor GATA binding 1"/>
    <property type="match status" value="1"/>
</dbReference>
<dbReference type="FunFam" id="3.30.50.10:FF:000020">
    <property type="entry name" value="Zinc finger transcription factor Trps1"/>
    <property type="match status" value="1"/>
</dbReference>
<dbReference type="FunFam" id="3.30.160.60:FF:000674">
    <property type="entry name" value="zinc finger transcription factor Trps1 isoform X2"/>
    <property type="match status" value="1"/>
</dbReference>
<dbReference type="Gene3D" id="3.30.160.60">
    <property type="entry name" value="Classic Zinc Finger"/>
    <property type="match status" value="2"/>
</dbReference>
<dbReference type="Gene3D" id="3.30.50.10">
    <property type="entry name" value="Erythroid Transcription Factor GATA-1, subunit A"/>
    <property type="match status" value="1"/>
</dbReference>
<dbReference type="InterPro" id="IPR028440">
    <property type="entry name" value="TRPS1"/>
</dbReference>
<dbReference type="InterPro" id="IPR036236">
    <property type="entry name" value="Znf_C2H2_sf"/>
</dbReference>
<dbReference type="InterPro" id="IPR013087">
    <property type="entry name" value="Znf_C2H2_type"/>
</dbReference>
<dbReference type="InterPro" id="IPR000679">
    <property type="entry name" value="Znf_GATA"/>
</dbReference>
<dbReference type="InterPro" id="IPR013088">
    <property type="entry name" value="Znf_NHR/GATA"/>
</dbReference>
<dbReference type="PANTHER" id="PTHR47034">
    <property type="entry name" value="ZINC FINGER TRANSCRIPTION FACTOR TRPS1"/>
    <property type="match status" value="1"/>
</dbReference>
<dbReference type="PANTHER" id="PTHR47034:SF1">
    <property type="entry name" value="ZINC FINGER TRANSCRIPTION FACTOR TRPS1"/>
    <property type="match status" value="1"/>
</dbReference>
<dbReference type="Pfam" id="PF00320">
    <property type="entry name" value="GATA"/>
    <property type="match status" value="1"/>
</dbReference>
<dbReference type="PRINTS" id="PR00619">
    <property type="entry name" value="GATAZNFINGER"/>
</dbReference>
<dbReference type="SMART" id="SM00355">
    <property type="entry name" value="ZnF_C2H2"/>
    <property type="match status" value="9"/>
</dbReference>
<dbReference type="SMART" id="SM00401">
    <property type="entry name" value="ZnF_GATA"/>
    <property type="match status" value="1"/>
</dbReference>
<dbReference type="SUPFAM" id="SSF57667">
    <property type="entry name" value="beta-beta-alpha zinc fingers"/>
    <property type="match status" value="1"/>
</dbReference>
<dbReference type="SUPFAM" id="SSF57716">
    <property type="entry name" value="Glucocorticoid receptor-like (DNA-binding domain)"/>
    <property type="match status" value="1"/>
</dbReference>
<dbReference type="PROSITE" id="PS00344">
    <property type="entry name" value="GATA_ZN_FINGER_1"/>
    <property type="match status" value="1"/>
</dbReference>
<dbReference type="PROSITE" id="PS50114">
    <property type="entry name" value="GATA_ZN_FINGER_2"/>
    <property type="match status" value="1"/>
</dbReference>
<dbReference type="PROSITE" id="PS00028">
    <property type="entry name" value="ZINC_FINGER_C2H2_1"/>
    <property type="match status" value="2"/>
</dbReference>
<dbReference type="PROSITE" id="PS50157">
    <property type="entry name" value="ZINC_FINGER_C2H2_2"/>
    <property type="match status" value="1"/>
</dbReference>
<accession>Q925H1</accession>
<keyword id="KW-0238">DNA-binding</keyword>
<keyword id="KW-1017">Isopeptide bond</keyword>
<keyword id="KW-0479">Metal-binding</keyword>
<keyword id="KW-0539">Nucleus</keyword>
<keyword id="KW-0597">Phosphoprotein</keyword>
<keyword id="KW-1185">Reference proteome</keyword>
<keyword id="KW-0677">Repeat</keyword>
<keyword id="KW-0678">Repressor</keyword>
<keyword id="KW-0804">Transcription</keyword>
<keyword id="KW-0805">Transcription regulation</keyword>
<keyword id="KW-0832">Ubl conjugation</keyword>
<keyword id="KW-0862">Zinc</keyword>
<keyword id="KW-0863">Zinc-finger</keyword>
<name>TRPS1_MOUSE</name>
<reference key="1">
    <citation type="journal article" date="2001" name="EMBO J.">
        <title>Transcriptional repression and developmental functions of the atypical vertebrate GATA protein TRPS1.</title>
        <authorList>
            <person name="Malik T.H."/>
            <person name="Shoichet S.A."/>
            <person name="Latham P."/>
            <person name="Kroll T.G."/>
            <person name="Peters L.L."/>
            <person name="Shivdasani R.A."/>
        </authorList>
    </citation>
    <scope>NUCLEOTIDE SEQUENCE [MRNA]</scope>
    <scope>FUNCTION</scope>
    <scope>DEVELOPMENTAL STAGE</scope>
    <source>
        <tissue>Fetal intestine</tissue>
    </source>
</reference>
<reference key="2">
    <citation type="journal article" date="2003" name="J. Biol. Chem.">
        <title>The RING finger protein RNF4, a co-regulator of transcription, interacts with the TRPS1 transcription factor.</title>
        <authorList>
            <person name="Kaiser F.J."/>
            <person name="Moeroey T."/>
            <person name="Chang G.T."/>
            <person name="Horsthemke B."/>
            <person name="Luedecke H.J."/>
        </authorList>
    </citation>
    <scope>INTERACTION WITH RNF4</scope>
</reference>
<reference key="3">
    <citation type="journal article" date="2009" name="Dev. Biol.">
        <title>Trps1, a regulator of chondrocyte proliferation and differentiation, interacts with the activator form of Gli3.</title>
        <authorList>
            <person name="Wuelling M."/>
            <person name="Kaiser F.J."/>
            <person name="Buelens L.A."/>
            <person name="Braunholz D."/>
            <person name="Shivdasani R.A."/>
            <person name="Depping R."/>
            <person name="Vortkamp A."/>
        </authorList>
    </citation>
    <scope>FUNCTION</scope>
    <scope>INTERACTION WITH GLI3</scope>
</reference>
<reference key="4">
    <citation type="journal article" date="2010" name="Cell">
        <title>A tissue-specific atlas of mouse protein phosphorylation and expression.</title>
        <authorList>
            <person name="Huttlin E.L."/>
            <person name="Jedrychowski M.P."/>
            <person name="Elias J.E."/>
            <person name="Goswami T."/>
            <person name="Rad R."/>
            <person name="Beausoleil S.A."/>
            <person name="Villen J."/>
            <person name="Haas W."/>
            <person name="Sowa M.E."/>
            <person name="Gygi S.P."/>
        </authorList>
    </citation>
    <scope>PHOSPHORYLATION [LARGE SCALE ANALYSIS] AT SER-127 AND SER-216</scope>
    <scope>IDENTIFICATION BY MASS SPECTROMETRY [LARGE SCALE ANALYSIS]</scope>
    <source>
        <tissue>Kidney</tissue>
    </source>
</reference>
<sequence length="1281" mass="141035">MVRKKHPPLRNVASEGEGQTLEPTATESKVSGKNKELSADQMSENTDQSDVAELNSKEEHSTHGQEPSSSGKKDLQISGLSEKAGFNYESPSKGGSLVSFPHDEVTDRNMLAFSSPAAGGVCEPLKSPQRAEADDPQDMACTPSGDSLETKEEHKMSPKATEETGPVQSGQANCQGLSPVSVASKNPQVPSDGGVRLSKPKGDLLVNDNPDPAPLSPELQDFKCNICGYGYYGNDPTDLIKHFRKYHLGLHNRTRQDAELDSKILALHNMVQFSHSKDFQKVNRSVLSGVLQDISSSRPALLNGTYDVQVTSGGTFIGIGRKTPDCQGNTKYFRCKFCNFTYMGNSSTELEQHFLQTHPNKIKVSLPSSEGVKPSEKNSNKSIPALRASDSGDVGKWQDKMTVKAGDDTPVGYSVPIKPLDSSRQNGTEATSYYWCKFCSFSCESSSSLKLLEHYGKQHGAVQSGGLNPELNDKLPRGSVINQNDLAKSVEGEPLTKPEKGLSGAKKKDFPSKGAEDNMVTSYNCQFCDFRYSKSHGPDVIVVGPLLRHYQQLHNIHKCTIKHCPFCPRGLCSPEKHLGEITYPFACRKSNCSHCALLLLHLSPGVAGSSRVKHQCHQCSFSTPDVDVLLFHYETVHESQASDVKQEANHLLGSDGQQAVRDSKEHSCTKCDFITQVEEEISRHYRRAHSCYKCRQCSFTAADTQSLLEHFNTVHCQEQEITTANGEEGGHAIPTIKEEPKIDLKVYSLLNPDSKMGETVPESIVKREKLDDKEGLKDKIWTESSTDDLRGVAWRGADILRGSPSYTQASLGLLTPVSSSQEQTKTLRDSPNVEAAHLARPMYGLAVDTKGFLQGAPAGSEKSASLTQQYPASGESKTKDESQSLLRRRRGSGVFCANCLTTKTSLWRKNANGGYVCNACGLYQKLHSTPRPLNIIKQNNGEQIIRRRTRKRLNPEALQAEQLNKQQRGSGEEQVNGSPLERRSEDHLSESHPREIPLPSLSKYEAQGSLTKSHSAQQPVLVSQALDIHKRMQPLHIQIKSPQESTGDPGNSSSVSDGKGSSERGSPIEKYMRPAKHPNYSPPGSPIEKYQYPLFGVPFVHNDFQSEADWLRFWSKYKLSVPGNPHYLSHVPGLPNPCQNYVPYPTFNLPPHFSAVGSDNDIPLDLAIKHSRPGPTANGASKEKTKAPPTVKNEDPLNVVKTEKVDRSTQDELSTKCVHCGIVFLDEVMYALHMSCHGDSGPFQCSICQHLCTDKYDFTTHIQRGLHRNNAQAEKNGKPKE</sequence>
<proteinExistence type="evidence at protein level"/>
<evidence type="ECO:0000250" key="1"/>
<evidence type="ECO:0000250" key="2">
    <source>
        <dbReference type="UniProtKB" id="Q9UHF7"/>
    </source>
</evidence>
<evidence type="ECO:0000255" key="3">
    <source>
        <dbReference type="PROSITE-ProRule" id="PRU00042"/>
    </source>
</evidence>
<evidence type="ECO:0000255" key="4">
    <source>
        <dbReference type="PROSITE-ProRule" id="PRU00094"/>
    </source>
</evidence>
<evidence type="ECO:0000256" key="5">
    <source>
        <dbReference type="SAM" id="MobiDB-lite"/>
    </source>
</evidence>
<evidence type="ECO:0000269" key="6">
    <source>
    </source>
</evidence>
<evidence type="ECO:0000269" key="7">
    <source>
    </source>
</evidence>
<evidence type="ECO:0000269" key="8">
    <source>
    </source>
</evidence>
<evidence type="ECO:0007744" key="9">
    <source>
    </source>
</evidence>
<comment type="function">
    <text evidence="6 8">Transcriptional repressor. Binds specifically to GATA sequences and represses expression of GATA-regulated genes at selected sites and stages in vertebrate development. Regulates chondrocyte proliferation and differentiation. Executes multiple functions in proliferating chondrocytes, expanding the region of distal chondrocytes, activating proliferation in columnar cells and supporting the differentiation of columnar into hypertrophic chondrocytes.</text>
</comment>
<comment type="subunit">
    <text evidence="7 8">Interacts with RNF4; regulates TRPS1 repressor activity. Interacts specifically with the activator form of GLI3 (GLI3A) but not with the repressor form (GLI3R).</text>
</comment>
<comment type="subcellular location">
    <subcellularLocation>
        <location>Nucleus</location>
    </subcellularLocation>
</comment>
<comment type="tissue specificity">
    <text>In the embryo, expression is detected in both visceral and skeletal tissues. Found in the maxilla, mandible, snout, prospective phalanges and in the femoral head within the developing hip. Also expressed in the hair follicles.</text>
</comment>
<comment type="developmental stage">
    <text evidence="6">Detected prior to 7.5 dpc, with peak levels at around 11.5 dpc. In the developing limbs and face, levels are highest at 13.5 dpc and decline dramatically thereafter.</text>
</comment>
<comment type="PTM">
    <text evidence="1">Sumoylated. Sumoylation in the repressor domain inhibits the transcription repression activity. Sumoylation on Lys-1201 is the major site. Appears to be sumoylated on multiple sites (By similarity).</text>
</comment>
<feature type="chain" id="PRO_0000083509" description="Zinc finger transcription factor Trps1">
    <location>
        <begin position="1"/>
        <end position="1281"/>
    </location>
</feature>
<feature type="zinc finger region" description="C2H2-type 1; atypical" evidence="3">
    <location>
        <begin position="222"/>
        <end position="247"/>
    </location>
</feature>
<feature type="zinc finger region" description="C2H2-type 2; atypical" evidence="3">
    <location>
        <begin position="333"/>
        <end position="358"/>
    </location>
</feature>
<feature type="zinc finger region" description="C2H2-type 3; atypical" evidence="3">
    <location>
        <begin position="614"/>
        <end position="637"/>
    </location>
</feature>
<feature type="zinc finger region" description="C2H2-type 4" evidence="3">
    <location>
        <begin position="666"/>
        <end position="689"/>
    </location>
</feature>
<feature type="zinc finger region" description="C2H2-type 5" evidence="3">
    <location>
        <begin position="692"/>
        <end position="715"/>
    </location>
</feature>
<feature type="zinc finger region" description="GATA-type" evidence="4">
    <location>
        <begin position="896"/>
        <end position="920"/>
    </location>
</feature>
<feature type="zinc finger region" description="C2H2-type 6" evidence="3">
    <location>
        <begin position="1215"/>
        <end position="1237"/>
    </location>
</feature>
<feature type="zinc finger region" description="C2H2-type 7" evidence="3">
    <location>
        <begin position="1243"/>
        <end position="1267"/>
    </location>
</feature>
<feature type="region of interest" description="Disordered" evidence="5">
    <location>
        <begin position="1"/>
        <end position="101"/>
    </location>
</feature>
<feature type="region of interest" description="Disordered" evidence="5">
    <location>
        <begin position="116"/>
        <end position="204"/>
    </location>
</feature>
<feature type="region of interest" description="Disordered" evidence="5">
    <location>
        <begin position="365"/>
        <end position="393"/>
    </location>
</feature>
<feature type="region of interest" description="Disordered" evidence="5">
    <location>
        <begin position="484"/>
        <end position="515"/>
    </location>
</feature>
<feature type="region of interest" description="Mediates interaction with GLI3" evidence="1">
    <location>
        <begin position="635"/>
        <end position="819"/>
    </location>
</feature>
<feature type="region of interest" description="Disordered" evidence="5">
    <location>
        <begin position="856"/>
        <end position="885"/>
    </location>
</feature>
<feature type="region of interest" description="Disordered" evidence="5">
    <location>
        <begin position="961"/>
        <end position="1000"/>
    </location>
</feature>
<feature type="region of interest" description="Mediates interaction with RNF4" evidence="7">
    <location>
        <begin position="985"/>
        <end position="1184"/>
    </location>
</feature>
<feature type="region of interest" description="Disordered" evidence="5">
    <location>
        <begin position="1040"/>
        <end position="1078"/>
    </location>
</feature>
<feature type="region of interest" description="Transcriptional repressor domain" evidence="1">
    <location>
        <begin position="1163"/>
        <end position="1281"/>
    </location>
</feature>
<feature type="region of interest" description="Disordered" evidence="5">
    <location>
        <begin position="1169"/>
        <end position="1195"/>
    </location>
</feature>
<feature type="compositionally biased region" description="Polar residues" evidence="5">
    <location>
        <begin position="21"/>
        <end position="31"/>
    </location>
</feature>
<feature type="compositionally biased region" description="Polar residues" evidence="5">
    <location>
        <begin position="40"/>
        <end position="49"/>
    </location>
</feature>
<feature type="compositionally biased region" description="Basic and acidic residues" evidence="5">
    <location>
        <begin position="148"/>
        <end position="162"/>
    </location>
</feature>
<feature type="compositionally biased region" description="Polar residues" evidence="5">
    <location>
        <begin position="166"/>
        <end position="189"/>
    </location>
</feature>
<feature type="compositionally biased region" description="Basic and acidic residues" evidence="5">
    <location>
        <begin position="488"/>
        <end position="515"/>
    </location>
</feature>
<feature type="compositionally biased region" description="Polar residues" evidence="5">
    <location>
        <begin position="862"/>
        <end position="871"/>
    </location>
</feature>
<feature type="compositionally biased region" description="Polar residues" evidence="5">
    <location>
        <begin position="961"/>
        <end position="977"/>
    </location>
</feature>
<feature type="compositionally biased region" description="Basic and acidic residues" evidence="5">
    <location>
        <begin position="980"/>
        <end position="995"/>
    </location>
</feature>
<feature type="compositionally biased region" description="Polar residues" evidence="5">
    <location>
        <begin position="1040"/>
        <end position="1049"/>
    </location>
</feature>
<feature type="compositionally biased region" description="Low complexity" evidence="5">
    <location>
        <begin position="1050"/>
        <end position="1059"/>
    </location>
</feature>
<feature type="compositionally biased region" description="Basic and acidic residues" evidence="5">
    <location>
        <begin position="1060"/>
        <end position="1072"/>
    </location>
</feature>
<feature type="modified residue" description="Phosphoserine" evidence="2">
    <location>
        <position position="90"/>
    </location>
</feature>
<feature type="modified residue" description="Phosphoserine" evidence="9">
    <location>
        <position position="127"/>
    </location>
</feature>
<feature type="modified residue" description="Phosphoserine" evidence="2">
    <location>
        <position position="178"/>
    </location>
</feature>
<feature type="modified residue" description="Phosphoserine" evidence="9">
    <location>
        <position position="216"/>
    </location>
</feature>
<feature type="modified residue" description="Phosphoserine" evidence="2">
    <location>
        <position position="978"/>
    </location>
</feature>
<feature type="modified residue" description="Phosphoserine" evidence="2">
    <location>
        <position position="1041"/>
    </location>
</feature>
<feature type="modified residue" description="Phosphoserine" evidence="2">
    <location>
        <position position="1066"/>
    </location>
</feature>
<feature type="modified residue" description="Phosphoserine" evidence="2">
    <location>
        <position position="1085"/>
    </location>
</feature>
<feature type="cross-link" description="Glycyl lysine isopeptide (Lys-Gly) (interchain with G-Cter in SUMO2)" evidence="2">
    <location>
        <position position="29"/>
    </location>
</feature>
<feature type="cross-link" description="Glycyl lysine isopeptide (Lys-Gly) (interchain with G-Cter in SUMO2)" evidence="2">
    <location>
        <position position="263"/>
    </location>
</feature>
<feature type="cross-link" description="Glycyl lysine isopeptide (Lys-Gly) (interchain with G-Cter in SUMO2)" evidence="2">
    <location>
        <position position="418"/>
    </location>
</feature>
<feature type="cross-link" description="Glycyl lysine isopeptide (Lys-Gly) (interchain with G-Cter in SUMO2)" evidence="2">
    <location>
        <position position="457"/>
    </location>
</feature>
<feature type="cross-link" description="Glycyl lysine isopeptide (Lys-Gly) (interchain with G-Cter in SUMO2)" evidence="2">
    <location>
        <position position="474"/>
    </location>
</feature>
<feature type="cross-link" description="Glycyl lysine isopeptide (Lys-Gly) (interchain with G-Cter in SUMO2)" evidence="2">
    <location>
        <position position="488"/>
    </location>
</feature>
<feature type="cross-link" description="Glycyl lysine isopeptide (Lys-Gly) (interchain with G-Cter in SUMO2)" evidence="2">
    <location>
        <position position="645"/>
    </location>
</feature>
<feature type="cross-link" description="Glycyl lysine isopeptide (Lys-Gly) (interchain with G-Cter in SUMO2)" evidence="2">
    <location>
        <position position="737"/>
    </location>
</feature>
<feature type="cross-link" description="Glycyl lysine isopeptide (Lys-Gly) (interchain with G-Cter in SUMO2)" evidence="2">
    <location>
        <position position="755"/>
    </location>
</feature>
<feature type="cross-link" description="Glycyl lysine isopeptide (Lys-Gly) (interchain with G-Cter in SUMO1); alternate" evidence="2">
    <location>
        <position position="766"/>
    </location>
</feature>
<feature type="cross-link" description="Glycyl lysine isopeptide (Lys-Gly) (interchain with G-Cter in SUMO2); alternate" evidence="2">
    <location>
        <position position="766"/>
    </location>
</feature>
<feature type="cross-link" description="Glycyl lysine isopeptide (Lys-Gly) (interchain with G-Cter in SUMO2)" evidence="2">
    <location>
        <position position="825"/>
    </location>
</feature>
<feature type="cross-link" description="Glycyl lysine isopeptide (Lys-Gly) (interchain with G-Cter in SUMO2)" evidence="2">
    <location>
        <position position="850"/>
    </location>
</feature>
<feature type="cross-link" description="Glycyl lysine isopeptide (Lys-Gly) (interchain with G-Cter in SUMO2)" evidence="2">
    <location>
        <position position="877"/>
    </location>
</feature>
<feature type="cross-link" description="Glycyl lysine isopeptide (Lys-Gly) (interchain with G-Cter in SUMO2)" evidence="2">
    <location>
        <position position="879"/>
    </location>
</feature>
<feature type="cross-link" description="Glycyl lysine isopeptide (Lys-Gly) (interchain with G-Cter in SUMO2)" evidence="2">
    <location>
        <position position="925"/>
    </location>
</feature>
<feature type="cross-link" description="Glycyl lysine isopeptide (Lys-Gly) (interchain with G-Cter in SUMO2)" evidence="2">
    <location>
        <position position="937"/>
    </location>
</feature>
<feature type="cross-link" description="Glycyl lysine isopeptide (Lys-Gly) (interchain with G-Cter in SUMO2)" evidence="2">
    <location>
        <position position="965"/>
    </location>
</feature>
<feature type="cross-link" description="Glycyl lysine isopeptide (Lys-Gly) (interchain with G-Cter in SUMO2)" evidence="2">
    <location>
        <position position="1003"/>
    </location>
</feature>
<feature type="cross-link" description="Glycyl lysine isopeptide (Lys-Gly) (interchain with G-Cter in SUMO2)" evidence="2">
    <location>
        <position position="1012"/>
    </location>
</feature>
<feature type="cross-link" description="Glycyl lysine isopeptide (Lys-Gly) (interchain with G-Cter in SUMO2)" evidence="2">
    <location>
        <position position="1030"/>
    </location>
</feature>
<feature type="cross-link" description="Glycyl lysine isopeptide (Lys-Gly) (interchain with G-Cter in SUMO2)" evidence="2">
    <location>
        <position position="1040"/>
    </location>
</feature>
<feature type="cross-link" description="Glycyl lysine isopeptide (Lys-Gly) (interchain with G-Cter in SUMO2)" evidence="2">
    <location>
        <position position="1070"/>
    </location>
</feature>
<feature type="cross-link" description="Glycyl lysine isopeptide (Lys-Gly) (interchain with G-Cter in SUMO); alternate" evidence="1">
    <location>
        <position position="1192"/>
    </location>
</feature>
<feature type="cross-link" description="Glycyl lysine isopeptide (Lys-Gly) (interchain with G-Cter in SUMO2); alternate" evidence="2">
    <location>
        <position position="1192"/>
    </location>
</feature>
<feature type="cross-link" description="Glycyl lysine isopeptide (Lys-Gly) (interchain with G-Cter in SUMO); alternate" evidence="1">
    <location>
        <position position="1201"/>
    </location>
</feature>
<feature type="cross-link" description="Glycyl lysine isopeptide (Lys-Gly) (interchain with G-Cter in SUMO1); alternate" evidence="2">
    <location>
        <position position="1201"/>
    </location>
</feature>
<feature type="cross-link" description="Glycyl lysine isopeptide (Lys-Gly) (interchain with G-Cter in SUMO2); alternate" evidence="2">
    <location>
        <position position="1201"/>
    </location>
</feature>